<feature type="chain" id="PRO_1000126016" description="Small ribosomal subunit protein uS7">
    <location>
        <begin position="1"/>
        <end position="156"/>
    </location>
</feature>
<proteinExistence type="inferred from homology"/>
<dbReference type="EMBL" id="CP000924">
    <property type="protein sequence ID" value="ABY94039.1"/>
    <property type="molecule type" value="Genomic_DNA"/>
</dbReference>
<dbReference type="RefSeq" id="WP_003870267.1">
    <property type="nucleotide sequence ID" value="NC_010321.1"/>
</dbReference>
<dbReference type="SMR" id="B0KCJ6"/>
<dbReference type="STRING" id="340099.Teth39_0370"/>
<dbReference type="KEGG" id="tpd:Teth39_0370"/>
<dbReference type="eggNOG" id="COG0049">
    <property type="taxonomic scope" value="Bacteria"/>
</dbReference>
<dbReference type="HOGENOM" id="CLU_072226_1_1_9"/>
<dbReference type="Proteomes" id="UP000002156">
    <property type="component" value="Chromosome"/>
</dbReference>
<dbReference type="GO" id="GO:0015935">
    <property type="term" value="C:small ribosomal subunit"/>
    <property type="evidence" value="ECO:0007669"/>
    <property type="project" value="InterPro"/>
</dbReference>
<dbReference type="GO" id="GO:0019843">
    <property type="term" value="F:rRNA binding"/>
    <property type="evidence" value="ECO:0007669"/>
    <property type="project" value="UniProtKB-UniRule"/>
</dbReference>
<dbReference type="GO" id="GO:0003735">
    <property type="term" value="F:structural constituent of ribosome"/>
    <property type="evidence" value="ECO:0007669"/>
    <property type="project" value="InterPro"/>
</dbReference>
<dbReference type="GO" id="GO:0000049">
    <property type="term" value="F:tRNA binding"/>
    <property type="evidence" value="ECO:0007669"/>
    <property type="project" value="UniProtKB-UniRule"/>
</dbReference>
<dbReference type="GO" id="GO:0006412">
    <property type="term" value="P:translation"/>
    <property type="evidence" value="ECO:0007669"/>
    <property type="project" value="UniProtKB-UniRule"/>
</dbReference>
<dbReference type="CDD" id="cd14869">
    <property type="entry name" value="uS7_Bacteria"/>
    <property type="match status" value="1"/>
</dbReference>
<dbReference type="FunFam" id="1.10.455.10:FF:000001">
    <property type="entry name" value="30S ribosomal protein S7"/>
    <property type="match status" value="1"/>
</dbReference>
<dbReference type="Gene3D" id="1.10.455.10">
    <property type="entry name" value="Ribosomal protein S7 domain"/>
    <property type="match status" value="1"/>
</dbReference>
<dbReference type="HAMAP" id="MF_00480_B">
    <property type="entry name" value="Ribosomal_uS7_B"/>
    <property type="match status" value="1"/>
</dbReference>
<dbReference type="InterPro" id="IPR000235">
    <property type="entry name" value="Ribosomal_uS7"/>
</dbReference>
<dbReference type="InterPro" id="IPR005717">
    <property type="entry name" value="Ribosomal_uS7_bac/org-type"/>
</dbReference>
<dbReference type="InterPro" id="IPR023798">
    <property type="entry name" value="Ribosomal_uS7_dom"/>
</dbReference>
<dbReference type="InterPro" id="IPR036823">
    <property type="entry name" value="Ribosomal_uS7_dom_sf"/>
</dbReference>
<dbReference type="NCBIfam" id="TIGR01029">
    <property type="entry name" value="rpsG_bact"/>
    <property type="match status" value="1"/>
</dbReference>
<dbReference type="PANTHER" id="PTHR11205">
    <property type="entry name" value="RIBOSOMAL PROTEIN S7"/>
    <property type="match status" value="1"/>
</dbReference>
<dbReference type="Pfam" id="PF00177">
    <property type="entry name" value="Ribosomal_S7"/>
    <property type="match status" value="1"/>
</dbReference>
<dbReference type="PIRSF" id="PIRSF002122">
    <property type="entry name" value="RPS7p_RPS7a_RPS5e_RPS7o"/>
    <property type="match status" value="1"/>
</dbReference>
<dbReference type="SUPFAM" id="SSF47973">
    <property type="entry name" value="Ribosomal protein S7"/>
    <property type="match status" value="1"/>
</dbReference>
<protein>
    <recommendedName>
        <fullName evidence="1">Small ribosomal subunit protein uS7</fullName>
    </recommendedName>
    <alternativeName>
        <fullName evidence="2">30S ribosomal protein S7</fullName>
    </alternativeName>
</protein>
<gene>
    <name evidence="1" type="primary">rpsG</name>
    <name type="ordered locus">Teth39_0370</name>
</gene>
<reference key="1">
    <citation type="submission" date="2008-01" db="EMBL/GenBank/DDBJ databases">
        <title>Complete sequence of Thermoanaerobacter pseudethanolicus 39E.</title>
        <authorList>
            <person name="Copeland A."/>
            <person name="Lucas S."/>
            <person name="Lapidus A."/>
            <person name="Barry K."/>
            <person name="Glavina del Rio T."/>
            <person name="Dalin E."/>
            <person name="Tice H."/>
            <person name="Pitluck S."/>
            <person name="Bruce D."/>
            <person name="Goodwin L."/>
            <person name="Saunders E."/>
            <person name="Brettin T."/>
            <person name="Detter J.C."/>
            <person name="Han C."/>
            <person name="Schmutz J."/>
            <person name="Larimer F."/>
            <person name="Land M."/>
            <person name="Hauser L."/>
            <person name="Kyrpides N."/>
            <person name="Lykidis A."/>
            <person name="Hemme C."/>
            <person name="Fields M.W."/>
            <person name="He Z."/>
            <person name="Zhou J."/>
            <person name="Richardson P."/>
        </authorList>
    </citation>
    <scope>NUCLEOTIDE SEQUENCE [LARGE SCALE GENOMIC DNA]</scope>
    <source>
        <strain>ATCC 33223 / DSM 2355 / 39E</strain>
    </source>
</reference>
<name>RS7_THEP3</name>
<evidence type="ECO:0000255" key="1">
    <source>
        <dbReference type="HAMAP-Rule" id="MF_00480"/>
    </source>
</evidence>
<evidence type="ECO:0000305" key="2"/>
<sequence>MPRKGHVERREVLPDPVYNSKKVSKLINKVMWDGKKSLAQKICYGAFDIIREKTGRDPLEVFEEALNNVMPVLEVRPRRVGGATYQVPVEVRPERRLSLGIRWLVEYARQRSGKSMMEKLAAEIMDAANNTGGSVKKKEDTHKMAEANKAFAHYRW</sequence>
<accession>B0KCJ6</accession>
<keyword id="KW-1185">Reference proteome</keyword>
<keyword id="KW-0687">Ribonucleoprotein</keyword>
<keyword id="KW-0689">Ribosomal protein</keyword>
<keyword id="KW-0694">RNA-binding</keyword>
<keyword id="KW-0699">rRNA-binding</keyword>
<keyword id="KW-0820">tRNA-binding</keyword>
<organism>
    <name type="scientific">Thermoanaerobacter pseudethanolicus (strain ATCC 33223 / 39E)</name>
    <name type="common">Clostridium thermohydrosulfuricum</name>
    <dbReference type="NCBI Taxonomy" id="340099"/>
    <lineage>
        <taxon>Bacteria</taxon>
        <taxon>Bacillati</taxon>
        <taxon>Bacillota</taxon>
        <taxon>Clostridia</taxon>
        <taxon>Thermoanaerobacterales</taxon>
        <taxon>Thermoanaerobacteraceae</taxon>
        <taxon>Thermoanaerobacter</taxon>
    </lineage>
</organism>
<comment type="function">
    <text evidence="1">One of the primary rRNA binding proteins, it binds directly to 16S rRNA where it nucleates assembly of the head domain of the 30S subunit. Is located at the subunit interface close to the decoding center, probably blocks exit of the E-site tRNA.</text>
</comment>
<comment type="subunit">
    <text evidence="1">Part of the 30S ribosomal subunit. Contacts proteins S9 and S11.</text>
</comment>
<comment type="similarity">
    <text evidence="1">Belongs to the universal ribosomal protein uS7 family.</text>
</comment>